<comment type="function">
    <text evidence="1">One of the primary rRNA binding proteins, it binds directly to 16S rRNA where it nucleates assembly of the head domain of the 30S subunit. Is located at the subunit interface close to the decoding center, probably blocks exit of the E-site tRNA.</text>
</comment>
<comment type="subunit">
    <text evidence="1">Part of the 30S ribosomal subunit. Contacts proteins S9 and S11.</text>
</comment>
<comment type="similarity">
    <text evidence="1">Belongs to the universal ribosomal protein uS7 family.</text>
</comment>
<keyword id="KW-0687">Ribonucleoprotein</keyword>
<keyword id="KW-0689">Ribosomal protein</keyword>
<keyword id="KW-0694">RNA-binding</keyword>
<keyword id="KW-0699">rRNA-binding</keyword>
<keyword id="KW-0820">tRNA-binding</keyword>
<organism>
    <name type="scientific">Burkholderia orbicola (strain MC0-3)</name>
    <dbReference type="NCBI Taxonomy" id="406425"/>
    <lineage>
        <taxon>Bacteria</taxon>
        <taxon>Pseudomonadati</taxon>
        <taxon>Pseudomonadota</taxon>
        <taxon>Betaproteobacteria</taxon>
        <taxon>Burkholderiales</taxon>
        <taxon>Burkholderiaceae</taxon>
        <taxon>Burkholderia</taxon>
        <taxon>Burkholderia cepacia complex</taxon>
        <taxon>Burkholderia orbicola</taxon>
    </lineage>
</organism>
<reference key="1">
    <citation type="submission" date="2008-02" db="EMBL/GenBank/DDBJ databases">
        <title>Complete sequence of chromosome 1 of Burkholderia cenocepacia MC0-3.</title>
        <authorList>
            <person name="Copeland A."/>
            <person name="Lucas S."/>
            <person name="Lapidus A."/>
            <person name="Barry K."/>
            <person name="Bruce D."/>
            <person name="Goodwin L."/>
            <person name="Glavina del Rio T."/>
            <person name="Dalin E."/>
            <person name="Tice H."/>
            <person name="Pitluck S."/>
            <person name="Chain P."/>
            <person name="Malfatti S."/>
            <person name="Shin M."/>
            <person name="Vergez L."/>
            <person name="Schmutz J."/>
            <person name="Larimer F."/>
            <person name="Land M."/>
            <person name="Hauser L."/>
            <person name="Kyrpides N."/>
            <person name="Mikhailova N."/>
            <person name="Tiedje J."/>
            <person name="Richardson P."/>
        </authorList>
    </citation>
    <scope>NUCLEOTIDE SEQUENCE [LARGE SCALE GENOMIC DNA]</scope>
    <source>
        <strain>MC0-3</strain>
    </source>
</reference>
<accession>B1JU18</accession>
<dbReference type="EMBL" id="CP000958">
    <property type="protein sequence ID" value="ACA89503.1"/>
    <property type="molecule type" value="Genomic_DNA"/>
</dbReference>
<dbReference type="RefSeq" id="WP_006477195.1">
    <property type="nucleotide sequence ID" value="NC_010508.1"/>
</dbReference>
<dbReference type="SMR" id="B1JU18"/>
<dbReference type="GeneID" id="93193455"/>
<dbReference type="KEGG" id="bcm:Bcenmc03_0323"/>
<dbReference type="HOGENOM" id="CLU_072226_1_1_4"/>
<dbReference type="Proteomes" id="UP000002169">
    <property type="component" value="Chromosome 1"/>
</dbReference>
<dbReference type="GO" id="GO:0015935">
    <property type="term" value="C:small ribosomal subunit"/>
    <property type="evidence" value="ECO:0007669"/>
    <property type="project" value="InterPro"/>
</dbReference>
<dbReference type="GO" id="GO:0019843">
    <property type="term" value="F:rRNA binding"/>
    <property type="evidence" value="ECO:0007669"/>
    <property type="project" value="UniProtKB-UniRule"/>
</dbReference>
<dbReference type="GO" id="GO:0003735">
    <property type="term" value="F:structural constituent of ribosome"/>
    <property type="evidence" value="ECO:0007669"/>
    <property type="project" value="InterPro"/>
</dbReference>
<dbReference type="GO" id="GO:0000049">
    <property type="term" value="F:tRNA binding"/>
    <property type="evidence" value="ECO:0007669"/>
    <property type="project" value="UniProtKB-UniRule"/>
</dbReference>
<dbReference type="GO" id="GO:0006412">
    <property type="term" value="P:translation"/>
    <property type="evidence" value="ECO:0007669"/>
    <property type="project" value="UniProtKB-UniRule"/>
</dbReference>
<dbReference type="CDD" id="cd14869">
    <property type="entry name" value="uS7_Bacteria"/>
    <property type="match status" value="1"/>
</dbReference>
<dbReference type="FunFam" id="1.10.455.10:FF:000001">
    <property type="entry name" value="30S ribosomal protein S7"/>
    <property type="match status" value="1"/>
</dbReference>
<dbReference type="Gene3D" id="1.10.455.10">
    <property type="entry name" value="Ribosomal protein S7 domain"/>
    <property type="match status" value="1"/>
</dbReference>
<dbReference type="HAMAP" id="MF_00480_B">
    <property type="entry name" value="Ribosomal_uS7_B"/>
    <property type="match status" value="1"/>
</dbReference>
<dbReference type="InterPro" id="IPR000235">
    <property type="entry name" value="Ribosomal_uS7"/>
</dbReference>
<dbReference type="InterPro" id="IPR005717">
    <property type="entry name" value="Ribosomal_uS7_bac/org-type"/>
</dbReference>
<dbReference type="InterPro" id="IPR020606">
    <property type="entry name" value="Ribosomal_uS7_CS"/>
</dbReference>
<dbReference type="InterPro" id="IPR023798">
    <property type="entry name" value="Ribosomal_uS7_dom"/>
</dbReference>
<dbReference type="InterPro" id="IPR036823">
    <property type="entry name" value="Ribosomal_uS7_dom_sf"/>
</dbReference>
<dbReference type="NCBIfam" id="TIGR01029">
    <property type="entry name" value="rpsG_bact"/>
    <property type="match status" value="1"/>
</dbReference>
<dbReference type="PANTHER" id="PTHR11205">
    <property type="entry name" value="RIBOSOMAL PROTEIN S7"/>
    <property type="match status" value="1"/>
</dbReference>
<dbReference type="Pfam" id="PF00177">
    <property type="entry name" value="Ribosomal_S7"/>
    <property type="match status" value="1"/>
</dbReference>
<dbReference type="PIRSF" id="PIRSF002122">
    <property type="entry name" value="RPS7p_RPS7a_RPS5e_RPS7o"/>
    <property type="match status" value="1"/>
</dbReference>
<dbReference type="SUPFAM" id="SSF47973">
    <property type="entry name" value="Ribosomal protein S7"/>
    <property type="match status" value="1"/>
</dbReference>
<dbReference type="PROSITE" id="PS00052">
    <property type="entry name" value="RIBOSOMAL_S7"/>
    <property type="match status" value="1"/>
</dbReference>
<name>RS7_BURO0</name>
<protein>
    <recommendedName>
        <fullName evidence="1">Small ribosomal subunit protein uS7</fullName>
    </recommendedName>
    <alternativeName>
        <fullName evidence="2">30S ribosomal protein S7</fullName>
    </alternativeName>
</protein>
<proteinExistence type="inferred from homology"/>
<feature type="chain" id="PRO_1000125906" description="Small ribosomal subunit protein uS7">
    <location>
        <begin position="1"/>
        <end position="156"/>
    </location>
</feature>
<evidence type="ECO:0000255" key="1">
    <source>
        <dbReference type="HAMAP-Rule" id="MF_00480"/>
    </source>
</evidence>
<evidence type="ECO:0000305" key="2"/>
<gene>
    <name evidence="1" type="primary">rpsG</name>
    <name type="ordered locus">Bcenmc03_0323</name>
</gene>
<sequence length="156" mass="17670">MPRRREVPKREVLPDPKFGNVDVAKFMNMLMLSGKKSVAERIVYGAFEQIQTKGGKDPLEVFTVALNNVKPVVEVKSRRVGGANYQVPVEVRPSRRMALAMRWLREAAKKRSEKSMALRLAGELSEAAEGRGGAMKKRDEVHRMAEANRAFSHFRF</sequence>